<comment type="function">
    <text evidence="4">Catalyzes the phosphorylation of hexose, such as D-glucose and D-fructose, to hexose 6-phosphate (D-glucose 6-phosphate and D-fructose 6-phosphate, respectively) (PubMed:12882981). Has higher affinity for D-glucose (PubMed:12882981). Mediates the initial step of glycolysis by catalyzing phosphorylation of D-glucose to D-glucose 6-phosphate (PubMed:12882981).</text>
</comment>
<comment type="catalytic activity">
    <reaction evidence="4">
        <text>a D-hexose + ATP = a D-hexose 6-phosphate + ADP + H(+)</text>
        <dbReference type="Rhea" id="RHEA:22740"/>
        <dbReference type="ChEBI" id="CHEBI:4194"/>
        <dbReference type="ChEBI" id="CHEBI:15378"/>
        <dbReference type="ChEBI" id="CHEBI:30616"/>
        <dbReference type="ChEBI" id="CHEBI:229467"/>
        <dbReference type="ChEBI" id="CHEBI:456216"/>
        <dbReference type="EC" id="2.7.1.1"/>
    </reaction>
    <physiologicalReaction direction="left-to-right" evidence="4">
        <dbReference type="Rhea" id="RHEA:22741"/>
    </physiologicalReaction>
</comment>
<comment type="catalytic activity">
    <reaction evidence="4">
        <text>D-fructose + ATP = D-fructose 6-phosphate + ADP + H(+)</text>
        <dbReference type="Rhea" id="RHEA:16125"/>
        <dbReference type="ChEBI" id="CHEBI:15378"/>
        <dbReference type="ChEBI" id="CHEBI:30616"/>
        <dbReference type="ChEBI" id="CHEBI:37721"/>
        <dbReference type="ChEBI" id="CHEBI:61527"/>
        <dbReference type="ChEBI" id="CHEBI:456216"/>
        <dbReference type="EC" id="2.7.1.1"/>
    </reaction>
    <physiologicalReaction direction="left-to-right" evidence="4">
        <dbReference type="Rhea" id="RHEA:16126"/>
    </physiologicalReaction>
</comment>
<comment type="catalytic activity">
    <reaction evidence="4">
        <text>D-glucose + ATP = D-glucose 6-phosphate + ADP + H(+)</text>
        <dbReference type="Rhea" id="RHEA:17825"/>
        <dbReference type="ChEBI" id="CHEBI:4167"/>
        <dbReference type="ChEBI" id="CHEBI:15378"/>
        <dbReference type="ChEBI" id="CHEBI:30616"/>
        <dbReference type="ChEBI" id="CHEBI:61548"/>
        <dbReference type="ChEBI" id="CHEBI:456216"/>
        <dbReference type="EC" id="2.7.1.1"/>
    </reaction>
</comment>
<comment type="pathway">
    <text evidence="6">Carbohydrate metabolism; hexose metabolism.</text>
</comment>
<comment type="pathway">
    <text evidence="6">Carbohydrate degradation; glycolysis; D-glyceraldehyde 3-phosphate and glycerone phosphate from D-glucose: step 1/4.</text>
</comment>
<comment type="subunit">
    <text evidence="4">Monomer and homodimer. The monomeric form is active, the homodimeric form inactive.</text>
</comment>
<comment type="mass spectrometry" mass="53476.0" error="5.0" method="Electrospray" evidence="4"/>
<comment type="similarity">
    <text evidence="3 5">Belongs to the hexokinase family.</text>
</comment>
<accession>P33284</accession>
<dbReference type="EC" id="2.7.1.1" evidence="4"/>
<dbReference type="EMBL" id="X61680">
    <property type="protein sequence ID" value="CAA43855.1"/>
    <property type="molecule type" value="Genomic_DNA"/>
</dbReference>
<dbReference type="EMBL" id="CR382124">
    <property type="protein sequence ID" value="CAH00663.1"/>
    <property type="molecule type" value="Genomic_DNA"/>
</dbReference>
<dbReference type="PIR" id="A48132">
    <property type="entry name" value="A48132"/>
</dbReference>
<dbReference type="RefSeq" id="XP_453567.1">
    <property type="nucleotide sequence ID" value="XM_453567.1"/>
</dbReference>
<dbReference type="PDB" id="3O08">
    <property type="method" value="X-ray"/>
    <property type="resolution" value="2.00 A"/>
    <property type="chains" value="A/B=1-485"/>
</dbReference>
<dbReference type="PDB" id="3O1B">
    <property type="method" value="X-ray"/>
    <property type="resolution" value="2.80 A"/>
    <property type="chains" value="A=1-485"/>
</dbReference>
<dbReference type="PDB" id="3O1W">
    <property type="method" value="X-ray"/>
    <property type="resolution" value="1.66 A"/>
    <property type="chains" value="A/B=1-485"/>
</dbReference>
<dbReference type="PDB" id="3O4W">
    <property type="method" value="X-ray"/>
    <property type="resolution" value="1.61 A"/>
    <property type="chains" value="A/B=1-485"/>
</dbReference>
<dbReference type="PDB" id="3O5B">
    <property type="method" value="X-ray"/>
    <property type="resolution" value="1.97 A"/>
    <property type="chains" value="A/B=1-485"/>
</dbReference>
<dbReference type="PDB" id="3O6W">
    <property type="method" value="X-ray"/>
    <property type="resolution" value="1.48 A"/>
    <property type="chains" value="A/B=1-485"/>
</dbReference>
<dbReference type="PDB" id="3O80">
    <property type="method" value="X-ray"/>
    <property type="resolution" value="2.18 A"/>
    <property type="chains" value="A=1-485"/>
</dbReference>
<dbReference type="PDB" id="3O8M">
    <property type="method" value="X-ray"/>
    <property type="resolution" value="1.42 A"/>
    <property type="chains" value="A=1-485"/>
</dbReference>
<dbReference type="PDB" id="4JAX">
    <property type="method" value="X-ray"/>
    <property type="resolution" value="2.26 A"/>
    <property type="chains" value="A/B/C/D/E/F=1-485"/>
</dbReference>
<dbReference type="PDBsum" id="3O08"/>
<dbReference type="PDBsum" id="3O1B"/>
<dbReference type="PDBsum" id="3O1W"/>
<dbReference type="PDBsum" id="3O4W"/>
<dbReference type="PDBsum" id="3O5B"/>
<dbReference type="PDBsum" id="3O6W"/>
<dbReference type="PDBsum" id="3O80"/>
<dbReference type="PDBsum" id="3O8M"/>
<dbReference type="PDBsum" id="4JAX"/>
<dbReference type="SMR" id="P33284"/>
<dbReference type="FunCoup" id="P33284">
    <property type="interactions" value="999"/>
</dbReference>
<dbReference type="STRING" id="284590.P33284"/>
<dbReference type="iPTMnet" id="P33284"/>
<dbReference type="PaxDb" id="284590-P33284"/>
<dbReference type="KEGG" id="kla:KLLA0_D11352g"/>
<dbReference type="eggNOG" id="KOG1369">
    <property type="taxonomic scope" value="Eukaryota"/>
</dbReference>
<dbReference type="HOGENOM" id="CLU_014393_5_2_1"/>
<dbReference type="InParanoid" id="P33284"/>
<dbReference type="OMA" id="ADCVQQF"/>
<dbReference type="BRENDA" id="2.7.1.1">
    <property type="organism ID" value="2825"/>
</dbReference>
<dbReference type="SABIO-RK" id="P33284"/>
<dbReference type="UniPathway" id="UPA00109">
    <property type="reaction ID" value="UER00180"/>
</dbReference>
<dbReference type="UniPathway" id="UPA00242"/>
<dbReference type="EvolutionaryTrace" id="P33284"/>
<dbReference type="Proteomes" id="UP000000598">
    <property type="component" value="Chromosome D"/>
</dbReference>
<dbReference type="GO" id="GO:0005829">
    <property type="term" value="C:cytosol"/>
    <property type="evidence" value="ECO:0007669"/>
    <property type="project" value="TreeGrafter"/>
</dbReference>
<dbReference type="GO" id="GO:0005739">
    <property type="term" value="C:mitochondrion"/>
    <property type="evidence" value="ECO:0007669"/>
    <property type="project" value="TreeGrafter"/>
</dbReference>
<dbReference type="GO" id="GO:0005524">
    <property type="term" value="F:ATP binding"/>
    <property type="evidence" value="ECO:0007669"/>
    <property type="project" value="UniProtKB-KW"/>
</dbReference>
<dbReference type="GO" id="GO:0005536">
    <property type="term" value="F:D-glucose binding"/>
    <property type="evidence" value="ECO:0007669"/>
    <property type="project" value="InterPro"/>
</dbReference>
<dbReference type="GO" id="GO:0008865">
    <property type="term" value="F:fructokinase activity"/>
    <property type="evidence" value="ECO:0007669"/>
    <property type="project" value="TreeGrafter"/>
</dbReference>
<dbReference type="GO" id="GO:0004340">
    <property type="term" value="F:glucokinase activity"/>
    <property type="evidence" value="ECO:0007669"/>
    <property type="project" value="TreeGrafter"/>
</dbReference>
<dbReference type="GO" id="GO:0019158">
    <property type="term" value="F:mannokinase activity"/>
    <property type="evidence" value="ECO:0007669"/>
    <property type="project" value="TreeGrafter"/>
</dbReference>
<dbReference type="GO" id="GO:0006006">
    <property type="term" value="P:glucose metabolic process"/>
    <property type="evidence" value="ECO:0007669"/>
    <property type="project" value="TreeGrafter"/>
</dbReference>
<dbReference type="GO" id="GO:0006096">
    <property type="term" value="P:glycolytic process"/>
    <property type="evidence" value="ECO:0007669"/>
    <property type="project" value="UniProtKB-UniPathway"/>
</dbReference>
<dbReference type="GO" id="GO:0001678">
    <property type="term" value="P:intracellular glucose homeostasis"/>
    <property type="evidence" value="ECO:0007669"/>
    <property type="project" value="InterPro"/>
</dbReference>
<dbReference type="GO" id="GO:0006013">
    <property type="term" value="P:mannose metabolic process"/>
    <property type="evidence" value="ECO:0007669"/>
    <property type="project" value="TreeGrafter"/>
</dbReference>
<dbReference type="CDD" id="cd24087">
    <property type="entry name" value="ASKHA_NBD_HK1-2_fungi"/>
    <property type="match status" value="1"/>
</dbReference>
<dbReference type="FunFam" id="1.10.287.1250:FF:000001">
    <property type="entry name" value="Phosphotransferase"/>
    <property type="match status" value="1"/>
</dbReference>
<dbReference type="FunFam" id="3.30.420.40:FF:000092">
    <property type="entry name" value="Phosphotransferase"/>
    <property type="match status" value="1"/>
</dbReference>
<dbReference type="FunFam" id="3.40.367.20:FF:000004">
    <property type="entry name" value="Phosphotransferase"/>
    <property type="match status" value="1"/>
</dbReference>
<dbReference type="Gene3D" id="1.10.287.1250">
    <property type="match status" value="1"/>
</dbReference>
<dbReference type="Gene3D" id="3.30.420.40">
    <property type="match status" value="1"/>
</dbReference>
<dbReference type="Gene3D" id="3.40.367.20">
    <property type="match status" value="1"/>
</dbReference>
<dbReference type="InterPro" id="IPR043129">
    <property type="entry name" value="ATPase_NBD"/>
</dbReference>
<dbReference type="InterPro" id="IPR001312">
    <property type="entry name" value="Hexokinase"/>
</dbReference>
<dbReference type="InterPro" id="IPR019807">
    <property type="entry name" value="Hexokinase_BS"/>
</dbReference>
<dbReference type="InterPro" id="IPR022673">
    <property type="entry name" value="Hexokinase_C"/>
</dbReference>
<dbReference type="InterPro" id="IPR022672">
    <property type="entry name" value="Hexokinase_N"/>
</dbReference>
<dbReference type="PANTHER" id="PTHR19443">
    <property type="entry name" value="HEXOKINASE"/>
    <property type="match status" value="1"/>
</dbReference>
<dbReference type="PANTHER" id="PTHR19443:SF16">
    <property type="entry name" value="HEXOKINASE TYPE 1-RELATED"/>
    <property type="match status" value="1"/>
</dbReference>
<dbReference type="Pfam" id="PF00349">
    <property type="entry name" value="Hexokinase_1"/>
    <property type="match status" value="1"/>
</dbReference>
<dbReference type="Pfam" id="PF03727">
    <property type="entry name" value="Hexokinase_2"/>
    <property type="match status" value="1"/>
</dbReference>
<dbReference type="PRINTS" id="PR00475">
    <property type="entry name" value="HEXOKINASE"/>
</dbReference>
<dbReference type="SUPFAM" id="SSF53067">
    <property type="entry name" value="Actin-like ATPase domain"/>
    <property type="match status" value="2"/>
</dbReference>
<dbReference type="PROSITE" id="PS00378">
    <property type="entry name" value="HEXOKINASE_1"/>
    <property type="match status" value="1"/>
</dbReference>
<dbReference type="PROSITE" id="PS51748">
    <property type="entry name" value="HEXOKINASE_2"/>
    <property type="match status" value="1"/>
</dbReference>
<feature type="initiator methionine" description="Removed" evidence="4">
    <location>
        <position position="1"/>
    </location>
</feature>
<feature type="chain" id="PRO_0000197608" description="Hexokinase">
    <location>
        <begin position="2"/>
        <end position="485"/>
    </location>
</feature>
<feature type="domain" description="Hexokinase" evidence="3">
    <location>
        <begin position="21"/>
        <end position="468"/>
    </location>
</feature>
<feature type="region of interest" description="Hexokinase small subdomain" evidence="3">
    <location>
        <begin position="75"/>
        <end position="208"/>
    </location>
</feature>
<feature type="region of interest" description="Glucose-binding" evidence="2">
    <location>
        <begin position="151"/>
        <end position="177"/>
    </location>
</feature>
<feature type="region of interest" description="Hexokinase large subdomain" evidence="3">
    <location>
        <begin position="209"/>
        <end position="457"/>
    </location>
</feature>
<feature type="binding site" evidence="1">
    <location>
        <position position="111"/>
    </location>
    <ligand>
        <name>ATP</name>
        <dbReference type="ChEBI" id="CHEBI:30616"/>
    </ligand>
</feature>
<feature type="modified residue" description="Phosphoserine" evidence="4">
    <location>
        <position position="15"/>
    </location>
</feature>
<feature type="sequence conflict" description="In Ref. 1; CAA43855." evidence="5" ref="1">
    <original>A</original>
    <variation>R</variation>
    <location>
        <position position="206"/>
    </location>
</feature>
<feature type="helix" evidence="9">
    <location>
        <begin position="21"/>
        <end position="34"/>
    </location>
</feature>
<feature type="helix" evidence="9">
    <location>
        <begin position="38"/>
        <end position="56"/>
    </location>
</feature>
<feature type="strand" evidence="9">
    <location>
        <begin position="57"/>
        <end position="59"/>
    </location>
</feature>
<feature type="strand" evidence="8">
    <location>
        <begin position="61"/>
        <end position="63"/>
    </location>
</feature>
<feature type="strand" evidence="9">
    <location>
        <begin position="79"/>
        <end position="103"/>
    </location>
</feature>
<feature type="strand" evidence="9">
    <location>
        <begin position="105"/>
        <end position="113"/>
    </location>
</feature>
<feature type="helix" evidence="9">
    <location>
        <begin position="118"/>
        <end position="120"/>
    </location>
</feature>
<feature type="helix" evidence="9">
    <location>
        <begin position="123"/>
        <end position="141"/>
    </location>
</feature>
<feature type="strand" evidence="9">
    <location>
        <begin position="150"/>
        <end position="156"/>
    </location>
</feature>
<feature type="strand" evidence="7">
    <location>
        <begin position="158"/>
        <end position="161"/>
    </location>
</feature>
<feature type="strand" evidence="7">
    <location>
        <begin position="163"/>
        <end position="166"/>
    </location>
</feature>
<feature type="helix" evidence="9">
    <location>
        <begin position="187"/>
        <end position="197"/>
    </location>
</feature>
<feature type="strand" evidence="9">
    <location>
        <begin position="202"/>
        <end position="208"/>
    </location>
</feature>
<feature type="helix" evidence="9">
    <location>
        <begin position="210"/>
        <end position="221"/>
    </location>
</feature>
<feature type="strand" evidence="9">
    <location>
        <begin position="225"/>
        <end position="242"/>
    </location>
</feature>
<feature type="helix" evidence="9">
    <location>
        <begin position="243"/>
        <end position="245"/>
    </location>
</feature>
<feature type="helix" evidence="9">
    <location>
        <begin position="247"/>
        <end position="249"/>
    </location>
</feature>
<feature type="turn" evidence="9">
    <location>
        <begin position="250"/>
        <end position="252"/>
    </location>
</feature>
<feature type="strand" evidence="9">
    <location>
        <begin position="262"/>
        <end position="266"/>
    </location>
</feature>
<feature type="helix" evidence="9">
    <location>
        <begin position="269"/>
        <end position="271"/>
    </location>
</feature>
<feature type="turn" evidence="9">
    <location>
        <begin position="272"/>
        <end position="275"/>
    </location>
</feature>
<feature type="strand" evidence="9">
    <location>
        <begin position="277"/>
        <end position="279"/>
    </location>
</feature>
<feature type="helix" evidence="9">
    <location>
        <begin position="283"/>
        <end position="291"/>
    </location>
</feature>
<feature type="strand" evidence="9">
    <location>
        <begin position="292"/>
        <end position="294"/>
    </location>
</feature>
<feature type="helix" evidence="9">
    <location>
        <begin position="299"/>
        <end position="304"/>
    </location>
</feature>
<feature type="turn" evidence="9">
    <location>
        <begin position="306"/>
        <end position="308"/>
    </location>
</feature>
<feature type="helix" evidence="9">
    <location>
        <begin position="309"/>
        <end position="322"/>
    </location>
</feature>
<feature type="strand" evidence="9">
    <location>
        <begin position="325"/>
        <end position="327"/>
    </location>
</feature>
<feature type="helix" evidence="9">
    <location>
        <begin position="333"/>
        <end position="336"/>
    </location>
</feature>
<feature type="helix" evidence="9">
    <location>
        <begin position="344"/>
        <end position="351"/>
    </location>
</feature>
<feature type="helix" evidence="9">
    <location>
        <begin position="358"/>
        <end position="368"/>
    </location>
</feature>
<feature type="helix" evidence="9">
    <location>
        <begin position="374"/>
        <end position="406"/>
    </location>
</feature>
<feature type="strand" evidence="9">
    <location>
        <begin position="409"/>
        <end position="417"/>
    </location>
</feature>
<feature type="helix" evidence="9">
    <location>
        <begin position="418"/>
        <end position="422"/>
    </location>
</feature>
<feature type="helix" evidence="9">
    <location>
        <begin position="426"/>
        <end position="438"/>
    </location>
</feature>
<feature type="helix" evidence="9">
    <location>
        <begin position="445"/>
        <end position="447"/>
    </location>
</feature>
<feature type="strand" evidence="9">
    <location>
        <begin position="449"/>
        <end position="454"/>
    </location>
</feature>
<feature type="turn" evidence="9">
    <location>
        <begin position="458"/>
        <end position="460"/>
    </location>
</feature>
<feature type="helix" evidence="9">
    <location>
        <begin position="461"/>
        <end position="476"/>
    </location>
</feature>
<feature type="strand" evidence="9">
    <location>
        <begin position="480"/>
        <end position="482"/>
    </location>
</feature>
<organism>
    <name type="scientific">Kluyveromyces lactis (strain ATCC 8585 / CBS 2359 / DSM 70799 / NBRC 1267 / NRRL Y-1140 / WM37)</name>
    <name type="common">Yeast</name>
    <name type="synonym">Candida sphaerica</name>
    <dbReference type="NCBI Taxonomy" id="284590"/>
    <lineage>
        <taxon>Eukaryota</taxon>
        <taxon>Fungi</taxon>
        <taxon>Dikarya</taxon>
        <taxon>Ascomycota</taxon>
        <taxon>Saccharomycotina</taxon>
        <taxon>Saccharomycetes</taxon>
        <taxon>Saccharomycetales</taxon>
        <taxon>Saccharomycetaceae</taxon>
        <taxon>Kluyveromyces</taxon>
    </lineage>
</organism>
<proteinExistence type="evidence at protein level"/>
<gene>
    <name type="primary">RAG5</name>
    <name type="ordered locus">KLLA0D11352g</name>
</gene>
<evidence type="ECO:0000250" key="1"/>
<evidence type="ECO:0000255" key="2"/>
<evidence type="ECO:0000255" key="3">
    <source>
        <dbReference type="PROSITE-ProRule" id="PRU01084"/>
    </source>
</evidence>
<evidence type="ECO:0000269" key="4">
    <source>
    </source>
</evidence>
<evidence type="ECO:0000305" key="5"/>
<evidence type="ECO:0000305" key="6">
    <source>
    </source>
</evidence>
<evidence type="ECO:0007829" key="7">
    <source>
        <dbReference type="PDB" id="3O6W"/>
    </source>
</evidence>
<evidence type="ECO:0007829" key="8">
    <source>
        <dbReference type="PDB" id="3O80"/>
    </source>
</evidence>
<evidence type="ECO:0007829" key="9">
    <source>
        <dbReference type="PDB" id="3O8M"/>
    </source>
</evidence>
<protein>
    <recommendedName>
        <fullName>Hexokinase</fullName>
        <ecNumber evidence="4">2.7.1.1</ecNumber>
    </recommendedName>
</protein>
<keyword id="KW-0002">3D-structure</keyword>
<keyword id="KW-0021">Allosteric enzyme</keyword>
<keyword id="KW-0067">ATP-binding</keyword>
<keyword id="KW-0903">Direct protein sequencing</keyword>
<keyword id="KW-0324">Glycolysis</keyword>
<keyword id="KW-0418">Kinase</keyword>
<keyword id="KW-0547">Nucleotide-binding</keyword>
<keyword id="KW-0597">Phosphoprotein</keyword>
<keyword id="KW-1185">Reference proteome</keyword>
<keyword id="KW-0808">Transferase</keyword>
<name>HXK_KLULA</name>
<sequence length="485" mass="53610">MVRLGPKKPPARKGSMADVPANLMEQIHGLETLFTVSSEKMRSIVKHFISELDKGLSKKGGNIPMIPGWVVEYPTGKETGDFLALDLGGTNLRVVLVKLGGNHDFDTTQNKYRLPDHLRTGTSEQLWSFIAKCLKEFVDEWYPDGVSEPLPLGFTFSYPASQKKINSGVLQRWTKGFDIEGVEGHDVVPMLQEQIEKLNIPINVVALINDTTGTLVASLYTDPQTKMGIIIGTGVNGAYYDVVSGIEKLEGLLPEDIGPDSPMAINCEYGSFDNEHLVLPRTKYDVIIDEESPRPGQQAFEKMTSGYYLGEIMRLVLLDLYDSGFIFKDQDISKLKEAYVMDTSYPSKIEDDPFENLEDTDDLFKTNLNIETTVVERKLIRKLAELVGTRAARLTVCGVSAICDKRGYKTAHIAADGSVFNRYPGYKEKAAQALKDIYNWDVEKMEDHPIQLVAAEDGSGVGAAIIACLTQKRLAAGKSVGIKGE</sequence>
<reference key="1">
    <citation type="journal article" date="1993" name="Mol. Cell. Biol.">
        <title>The hexokinase gene is required for transcriptional regulation of the glucose transporter gene RAG1 in Kluyveromyces lactis.</title>
        <authorList>
            <person name="Prior C."/>
            <person name="Mamessier P."/>
            <person name="Fukuhara H."/>
            <person name="Chen X.J."/>
            <person name="Wesolowski-Louvel M."/>
        </authorList>
    </citation>
    <scope>NUCLEOTIDE SEQUENCE [GENOMIC DNA]</scope>
    <source>
        <strain>ATCC 76492 / CBS 2359/152 / CLIB 210</strain>
        <strain>PM6-7A</strain>
    </source>
</reference>
<reference key="2">
    <citation type="journal article" date="2004" name="Nature">
        <title>Genome evolution in yeasts.</title>
        <authorList>
            <person name="Dujon B."/>
            <person name="Sherman D."/>
            <person name="Fischer G."/>
            <person name="Durrens P."/>
            <person name="Casaregola S."/>
            <person name="Lafontaine I."/>
            <person name="de Montigny J."/>
            <person name="Marck C."/>
            <person name="Neuveglise C."/>
            <person name="Talla E."/>
            <person name="Goffard N."/>
            <person name="Frangeul L."/>
            <person name="Aigle M."/>
            <person name="Anthouard V."/>
            <person name="Babour A."/>
            <person name="Barbe V."/>
            <person name="Barnay S."/>
            <person name="Blanchin S."/>
            <person name="Beckerich J.-M."/>
            <person name="Beyne E."/>
            <person name="Bleykasten C."/>
            <person name="Boisrame A."/>
            <person name="Boyer J."/>
            <person name="Cattolico L."/>
            <person name="Confanioleri F."/>
            <person name="de Daruvar A."/>
            <person name="Despons L."/>
            <person name="Fabre E."/>
            <person name="Fairhead C."/>
            <person name="Ferry-Dumazet H."/>
            <person name="Groppi A."/>
            <person name="Hantraye F."/>
            <person name="Hennequin C."/>
            <person name="Jauniaux N."/>
            <person name="Joyet P."/>
            <person name="Kachouri R."/>
            <person name="Kerrest A."/>
            <person name="Koszul R."/>
            <person name="Lemaire M."/>
            <person name="Lesur I."/>
            <person name="Ma L."/>
            <person name="Muller H."/>
            <person name="Nicaud J.-M."/>
            <person name="Nikolski M."/>
            <person name="Oztas S."/>
            <person name="Ozier-Kalogeropoulos O."/>
            <person name="Pellenz S."/>
            <person name="Potier S."/>
            <person name="Richard G.-F."/>
            <person name="Straub M.-L."/>
            <person name="Suleau A."/>
            <person name="Swennen D."/>
            <person name="Tekaia F."/>
            <person name="Wesolowski-Louvel M."/>
            <person name="Westhof E."/>
            <person name="Wirth B."/>
            <person name="Zeniou-Meyer M."/>
            <person name="Zivanovic Y."/>
            <person name="Bolotin-Fukuhara M."/>
            <person name="Thierry A."/>
            <person name="Bouchier C."/>
            <person name="Caudron B."/>
            <person name="Scarpelli C."/>
            <person name="Gaillardin C."/>
            <person name="Weissenbach J."/>
            <person name="Wincker P."/>
            <person name="Souciet J.-L."/>
        </authorList>
    </citation>
    <scope>NUCLEOTIDE SEQUENCE [LARGE SCALE GENOMIC DNA]</scope>
    <source>
        <strain>ATCC 8585 / CBS 2359 / DSM 70799 / NBRC 1267 / NRRL Y-1140 / WM37</strain>
    </source>
</reference>
<reference key="3">
    <citation type="journal article" date="2003" name="J. Biol. Chem.">
        <title>The unique hexokinase of Kluyveromyces lactis. Molecular and functional characterization and evaluation of a role in glucose signaling.</title>
        <authorList>
            <person name="Baer D."/>
            <person name="Golbik R."/>
            <person name="Huebner G."/>
            <person name="Lilie H."/>
            <person name="Mueller E.-C."/>
            <person name="Naumann M."/>
            <person name="Otto A."/>
            <person name="Reuter R."/>
            <person name="Breunig K.D."/>
            <person name="Kriegel T.M."/>
        </authorList>
    </citation>
    <scope>PROTEIN SEQUENCE OF 2-21; 136-163 AND 198-226</scope>
    <scope>MASS SPECTROMETRY</scope>
    <scope>FUNCTION</scope>
    <scope>CATALYTIC ACTIVITY</scope>
    <scope>SUBUNIT</scope>
    <scope>PHOSPHORYLATION AT SER-15</scope>
    <source>
        <strain>ATCC 76492 / CBS 2359/152 / CLIB 210</strain>
    </source>
</reference>